<protein>
    <recommendedName>
        <fullName evidence="1">Replication protein E1</fullName>
        <ecNumber evidence="1">5.6.2.4</ecNumber>
    </recommendedName>
    <alternativeName>
        <fullName evidence="1">ATP-dependent helicase E1</fullName>
    </alternativeName>
    <alternativeName>
        <fullName evidence="1">DNA 3'-5' helicase E1</fullName>
    </alternativeName>
</protein>
<organismHost>
    <name type="scientific">Homo sapiens</name>
    <name type="common">Human</name>
    <dbReference type="NCBI Taxonomy" id="9606"/>
</organismHost>
<proteinExistence type="inferred from homology"/>
<gene>
    <name evidence="1" type="primary">E1</name>
</gene>
<accession>P03111</accession>
<comment type="function">
    <text evidence="1">ATP-dependent DNA 3'-5' helicase required for initiation of viral DNA replication. It forms a complex with the viral E2 protein. The E1-E2 complex binds to the replication origin which contains binding sites for both proteins. During the initial step, a dimer of E1 interacts with a dimer of protein E2 leading to a complex that binds the viral origin of replication with high specificity. Then, a second dimer of E1 displaces the E2 dimer in an ATP-dependent manner to form the E1 tetramer. Following this, two E1 monomers are added to each half of the site, which results in the formation of two E1 trimers on the viral ori. Subsequently, two hexamers will be created. The double hexamer acts as a bi-directional helicase machinery and unwinds the viral DNA and then recruits the host DNA polymerase to start replication.</text>
</comment>
<comment type="catalytic activity">
    <reaction evidence="1">
        <text>Couples ATP hydrolysis with the unwinding of duplex DNA by translocating in the 3'-5' direction.</text>
        <dbReference type="EC" id="5.6.2.4"/>
    </reaction>
</comment>
<comment type="catalytic activity">
    <reaction evidence="1">
        <text>ATP + H2O = ADP + phosphate + H(+)</text>
        <dbReference type="Rhea" id="RHEA:13065"/>
        <dbReference type="ChEBI" id="CHEBI:15377"/>
        <dbReference type="ChEBI" id="CHEBI:15378"/>
        <dbReference type="ChEBI" id="CHEBI:30616"/>
        <dbReference type="ChEBI" id="CHEBI:43474"/>
        <dbReference type="ChEBI" id="CHEBI:456216"/>
        <dbReference type="EC" id="5.6.2.4"/>
    </reaction>
</comment>
<comment type="subunit">
    <text evidence="1">Can form hexamers. Interacts with E2 protein; this interaction increases E1 DNA binding specificity. Interacts with host DNA polymerase subunit POLA2. Interacts with host single stranded DNA-binding protein RPA1. Interacts with host TOP1; this interaction stimulates the enzymatic activity of TOP1.</text>
</comment>
<comment type="subcellular location">
    <subcellularLocation>
        <location evidence="1">Host nucleus</location>
    </subcellularLocation>
</comment>
<comment type="PTM">
    <text evidence="1">Phosphorylated.</text>
</comment>
<comment type="PTM">
    <text evidence="1">Sumoylated.</text>
</comment>
<comment type="similarity">
    <text evidence="1">Belongs to the papillomaviridae E1 protein family.</text>
</comment>
<keyword id="KW-0067">ATP-binding</keyword>
<keyword id="KW-0235">DNA replication</keyword>
<keyword id="KW-0238">DNA-binding</keyword>
<keyword id="KW-0244">Early protein</keyword>
<keyword id="KW-0347">Helicase</keyword>
<keyword id="KW-1048">Host nucleus</keyword>
<keyword id="KW-0378">Hydrolase</keyword>
<keyword id="KW-0413">Isomerase</keyword>
<keyword id="KW-1017">Isopeptide bond</keyword>
<keyword id="KW-0547">Nucleotide-binding</keyword>
<keyword id="KW-0597">Phosphoprotein</keyword>
<keyword id="KW-1185">Reference proteome</keyword>
<keyword id="KW-0832">Ubl conjugation</keyword>
<evidence type="ECO:0000255" key="1">
    <source>
        <dbReference type="HAMAP-Rule" id="MF_04000"/>
    </source>
</evidence>
<evidence type="ECO:0000256" key="2">
    <source>
        <dbReference type="SAM" id="MobiDB-lite"/>
    </source>
</evidence>
<name>VE1_HPV1</name>
<organism>
    <name type="scientific">Human papillomavirus type 1</name>
    <name type="common">Human papillomavirus type 1a</name>
    <dbReference type="NCBI Taxonomy" id="10583"/>
    <lineage>
        <taxon>Viruses</taxon>
        <taxon>Monodnaviria</taxon>
        <taxon>Shotokuvirae</taxon>
        <taxon>Cossaviricota</taxon>
        <taxon>Papovaviricetes</taxon>
        <taxon>Zurhausenvirales</taxon>
        <taxon>Papillomaviridae</taxon>
        <taxon>Firstpapillomavirinae</taxon>
        <taxon>Mupapillomavirus</taxon>
        <taxon>Mupapillomavirus 1</taxon>
    </lineage>
</organism>
<feature type="chain" id="PRO_0000133097" description="Replication protein E1">
    <location>
        <begin position="1"/>
        <end position="612"/>
    </location>
</feature>
<feature type="domain" description="SF3 helicase" evidence="1">
    <location>
        <begin position="414"/>
        <end position="564"/>
    </location>
</feature>
<feature type="region of interest" description="DNA-binding region" evidence="1">
    <location>
        <begin position="148"/>
        <end position="315"/>
    </location>
</feature>
<feature type="region of interest" description="Disordered" evidence="2">
    <location>
        <begin position="587"/>
        <end position="612"/>
    </location>
</feature>
<feature type="short sequence motif" description="Nuclear localization signal" evidence="1">
    <location>
        <begin position="74"/>
        <end position="76"/>
    </location>
</feature>
<feature type="short sequence motif" description="Nuclear export signal" evidence="1">
    <location>
        <begin position="94"/>
        <end position="103"/>
    </location>
</feature>
<feature type="binding site" evidence="1">
    <location>
        <begin position="440"/>
        <end position="447"/>
    </location>
    <ligand>
        <name>ATP</name>
        <dbReference type="ChEBI" id="CHEBI:30616"/>
    </ligand>
</feature>
<feature type="modified residue" description="Phosphoserine; by host" evidence="1">
    <location>
        <position position="80"/>
    </location>
</feature>
<feature type="modified residue" description="Phosphoserine; by host" evidence="1">
    <location>
        <position position="95"/>
    </location>
</feature>
<feature type="cross-link" description="Glycyl lysine isopeptide (Lys-Gly) (interchain with G-Cter in SUMO)" evidence="1">
    <location>
        <position position="521"/>
    </location>
</feature>
<sequence length="612" mass="69872">MADNKGTENDWFLVEATDCEETLEETSLGDLDNVSCVSDLSDLLDEAPQSQGNSLELFHKQESLESEQELNALKRKLLYSPQARSADETDIASISPRLETISITKQDKKRYRRQLFSQDDSGLELSLLQDETENIDESTQVDQQQKEHTGEVGAAGVNILKASNIRAALLSRFKDTAGVSFTDLTRSYKSNKTCCGDWVLAVWGVRENLIDSVKELLQTHCVYIQLEHAVTEKNRFLFLLVRFKAQKSRETVIKLITTILPVDASYILSEPPKSRSVAAALFWYKRSMSSTVFTWGTTLEWIAQQTLINHQLDSESPFELCKMVQWAYDNGHTEECKIAYYYAVLADEDENARAFLSSNSQAKYVKDCAQMVRHYLRAEMAQMSMSEWIFRKLDNVEGSGNWKEIVRFLRFQEVEFISFMIAFKDLLCGKPKKNCLLIFGPPNTGKSMFCTSLLKLLGGKVISYCNSKSQFWLQPLADAKIGLLDDATKPCWDYMDIYMRNALDGNTICIDLKHRAPQQIKCPPLLITSNIDVKSDTCWMYLHSRISAFKFAHEFPFKDNGDPGFSLTDENWKSFFERFWQQLELSDQEDEGNDGKPQQSLRLTARAANEPI</sequence>
<dbReference type="EC" id="5.6.2.4" evidence="1"/>
<dbReference type="EMBL" id="V01116">
    <property type="status" value="NOT_ANNOTATED_CDS"/>
    <property type="molecule type" value="Genomic_DNA"/>
</dbReference>
<dbReference type="PIR" id="A03655">
    <property type="entry name" value="W1WLE"/>
</dbReference>
<dbReference type="SMR" id="P03111"/>
<dbReference type="Proteomes" id="UP000006372">
    <property type="component" value="Segment"/>
</dbReference>
<dbReference type="GO" id="GO:0042025">
    <property type="term" value="C:host cell nucleus"/>
    <property type="evidence" value="ECO:0007669"/>
    <property type="project" value="UniProtKB-SubCell"/>
</dbReference>
<dbReference type="GO" id="GO:0005524">
    <property type="term" value="F:ATP binding"/>
    <property type="evidence" value="ECO:0007669"/>
    <property type="project" value="UniProtKB-UniRule"/>
</dbReference>
<dbReference type="GO" id="GO:0016887">
    <property type="term" value="F:ATP hydrolysis activity"/>
    <property type="evidence" value="ECO:0007669"/>
    <property type="project" value="RHEA"/>
</dbReference>
<dbReference type="GO" id="GO:0003677">
    <property type="term" value="F:DNA binding"/>
    <property type="evidence" value="ECO:0007669"/>
    <property type="project" value="UniProtKB-UniRule"/>
</dbReference>
<dbReference type="GO" id="GO:0003678">
    <property type="term" value="F:DNA helicase activity"/>
    <property type="evidence" value="ECO:0007669"/>
    <property type="project" value="UniProtKB-UniRule"/>
</dbReference>
<dbReference type="GO" id="GO:0006260">
    <property type="term" value="P:DNA replication"/>
    <property type="evidence" value="ECO:0007669"/>
    <property type="project" value="UniProtKB-UniRule"/>
</dbReference>
<dbReference type="Gene3D" id="3.40.1310.10">
    <property type="match status" value="1"/>
</dbReference>
<dbReference type="Gene3D" id="3.40.50.300">
    <property type="entry name" value="P-loop containing nucleotide triphosphate hydrolases"/>
    <property type="match status" value="1"/>
</dbReference>
<dbReference type="Gene3D" id="1.10.10.510">
    <property type="entry name" value="Zinc finger, large T-antigen D1 domain"/>
    <property type="match status" value="1"/>
</dbReference>
<dbReference type="HAMAP" id="MF_04000">
    <property type="entry name" value="PPV_E1"/>
    <property type="match status" value="1"/>
</dbReference>
<dbReference type="InterPro" id="IPR014015">
    <property type="entry name" value="Helicase_SF3_DNA-vir"/>
</dbReference>
<dbReference type="InterPro" id="IPR027417">
    <property type="entry name" value="P-loop_NTPase"/>
</dbReference>
<dbReference type="InterPro" id="IPR001177">
    <property type="entry name" value="PPV_DNA_helicase_E1_C"/>
</dbReference>
<dbReference type="InterPro" id="IPR014000">
    <property type="entry name" value="PPV_DNA_helicase_E1_N"/>
</dbReference>
<dbReference type="InterPro" id="IPR046832">
    <property type="entry name" value="PPV_E1_DBD"/>
</dbReference>
<dbReference type="InterPro" id="IPR046935">
    <property type="entry name" value="PPV_E1_DBD_sf"/>
</dbReference>
<dbReference type="InterPro" id="IPR016393">
    <property type="entry name" value="Rep_E1_papillomaV"/>
</dbReference>
<dbReference type="InterPro" id="IPR037102">
    <property type="entry name" value="Znf_lg_T-Ag_D1_dom_sf"/>
</dbReference>
<dbReference type="Pfam" id="PF00519">
    <property type="entry name" value="PPV_E1_C"/>
    <property type="match status" value="1"/>
</dbReference>
<dbReference type="Pfam" id="PF20450">
    <property type="entry name" value="PPV_E1_DBD"/>
    <property type="match status" value="1"/>
</dbReference>
<dbReference type="Pfam" id="PF00524">
    <property type="entry name" value="PPV_E1_N"/>
    <property type="match status" value="1"/>
</dbReference>
<dbReference type="PIRSF" id="PIRSF003383">
    <property type="entry name" value="Rep_E1_papillomaV"/>
    <property type="match status" value="1"/>
</dbReference>
<dbReference type="SUPFAM" id="SSF55464">
    <property type="entry name" value="Origin of replication-binding domain, RBD-like"/>
    <property type="match status" value="1"/>
</dbReference>
<dbReference type="SUPFAM" id="SSF52540">
    <property type="entry name" value="P-loop containing nucleoside triphosphate hydrolases"/>
    <property type="match status" value="1"/>
</dbReference>
<dbReference type="PROSITE" id="PS51206">
    <property type="entry name" value="SF3_HELICASE_1"/>
    <property type="match status" value="1"/>
</dbReference>
<reference key="1">
    <citation type="journal article" date="1982" name="EMBO J.">
        <title>Human papillomavirus 1a complete DNA sequence: a novel type of genome organization among papovaviridae.</title>
        <authorList>
            <person name="Danos O."/>
            <person name="Katinka M."/>
            <person name="Yaniv M."/>
        </authorList>
    </citation>
    <scope>NUCLEOTIDE SEQUENCE [GENOMIC DNA]</scope>
</reference>
<reference key="2">
    <citation type="journal article" date="1983" name="J. Virol.">
        <title>Comparative analysis of the human type 1a and bovine type 1 papillomavirus genomes.</title>
        <authorList>
            <person name="Danos O."/>
            <person name="Engel L.W."/>
            <person name="Chen E.Y."/>
            <person name="Yaniv M."/>
            <person name="Howley P.M."/>
        </authorList>
    </citation>
    <scope>NUCLEOTIDE SEQUENCE [GENOMIC DNA]</scope>
</reference>